<comment type="catalytic activity">
    <reaction evidence="1">
        <text>tRNA(Gly) + glycine + ATP = glycyl-tRNA(Gly) + AMP + diphosphate</text>
        <dbReference type="Rhea" id="RHEA:16013"/>
        <dbReference type="Rhea" id="RHEA-COMP:9664"/>
        <dbReference type="Rhea" id="RHEA-COMP:9683"/>
        <dbReference type="ChEBI" id="CHEBI:30616"/>
        <dbReference type="ChEBI" id="CHEBI:33019"/>
        <dbReference type="ChEBI" id="CHEBI:57305"/>
        <dbReference type="ChEBI" id="CHEBI:78442"/>
        <dbReference type="ChEBI" id="CHEBI:78522"/>
        <dbReference type="ChEBI" id="CHEBI:456215"/>
        <dbReference type="EC" id="6.1.1.14"/>
    </reaction>
</comment>
<comment type="subunit">
    <text evidence="1">Tetramer of two alpha and two beta subunits.</text>
</comment>
<comment type="subcellular location">
    <subcellularLocation>
        <location evidence="1">Cytoplasm</location>
    </subcellularLocation>
</comment>
<comment type="similarity">
    <text evidence="1">Belongs to the class-II aminoacyl-tRNA synthetase family.</text>
</comment>
<sequence>MQKFDTRTFQGLILTLQDYWARQGCTIVQPLDMEVGAGTSHPMTCLRALGPEPMATAYVQPSRRPTDGRYGENPNRLQHYYQFQVVIKPSPDNIQELYLGSLKELGMDPTIHDIRFVEDNWENPTLGAWGLGWEVWLNGMEVTQFTYFQQVGGLECKPVTGEITYGLERLAMYIQGVDSVYDLVWSDGPLGKTTYGDVFHQNEVEQSTYNFEYADVDFLFTCFEQYEKEAQQLLALENPLPLPAYERILKAAHSFNLLDARKAISVTERQRYILRIRTLTKAVAEAYYASREALGFPMCNKDK</sequence>
<organism>
    <name type="scientific">Salmonella paratyphi C (strain RKS4594)</name>
    <dbReference type="NCBI Taxonomy" id="476213"/>
    <lineage>
        <taxon>Bacteria</taxon>
        <taxon>Pseudomonadati</taxon>
        <taxon>Pseudomonadota</taxon>
        <taxon>Gammaproteobacteria</taxon>
        <taxon>Enterobacterales</taxon>
        <taxon>Enterobacteriaceae</taxon>
        <taxon>Salmonella</taxon>
    </lineage>
</organism>
<proteinExistence type="inferred from homology"/>
<name>SYGA_SALPC</name>
<accession>C0Q1B7</accession>
<protein>
    <recommendedName>
        <fullName evidence="1">Glycine--tRNA ligase alpha subunit</fullName>
        <ecNumber evidence="1">6.1.1.14</ecNumber>
    </recommendedName>
    <alternativeName>
        <fullName evidence="1">Glycyl-tRNA synthetase alpha subunit</fullName>
        <shortName evidence="1">GlyRS</shortName>
    </alternativeName>
</protein>
<reference key="1">
    <citation type="journal article" date="2009" name="PLoS ONE">
        <title>Salmonella paratyphi C: genetic divergence from Salmonella choleraesuis and pathogenic convergence with Salmonella typhi.</title>
        <authorList>
            <person name="Liu W.-Q."/>
            <person name="Feng Y."/>
            <person name="Wang Y."/>
            <person name="Zou Q.-H."/>
            <person name="Chen F."/>
            <person name="Guo J.-T."/>
            <person name="Peng Y.-H."/>
            <person name="Jin Y."/>
            <person name="Li Y.-G."/>
            <person name="Hu S.-N."/>
            <person name="Johnston R.N."/>
            <person name="Liu G.-R."/>
            <person name="Liu S.-L."/>
        </authorList>
    </citation>
    <scope>NUCLEOTIDE SEQUENCE [LARGE SCALE GENOMIC DNA]</scope>
    <source>
        <strain>RKS4594</strain>
    </source>
</reference>
<keyword id="KW-0030">Aminoacyl-tRNA synthetase</keyword>
<keyword id="KW-0067">ATP-binding</keyword>
<keyword id="KW-0963">Cytoplasm</keyword>
<keyword id="KW-0436">Ligase</keyword>
<keyword id="KW-0547">Nucleotide-binding</keyword>
<keyword id="KW-0648">Protein biosynthesis</keyword>
<evidence type="ECO:0000255" key="1">
    <source>
        <dbReference type="HAMAP-Rule" id="MF_00254"/>
    </source>
</evidence>
<gene>
    <name evidence="1" type="primary">glyQ</name>
    <name type="ordered locus">SPC_3735</name>
</gene>
<feature type="chain" id="PRO_1000125553" description="Glycine--tRNA ligase alpha subunit">
    <location>
        <begin position="1"/>
        <end position="303"/>
    </location>
</feature>
<dbReference type="EC" id="6.1.1.14" evidence="1"/>
<dbReference type="EMBL" id="CP000857">
    <property type="protein sequence ID" value="ACN47813.1"/>
    <property type="molecule type" value="Genomic_DNA"/>
</dbReference>
<dbReference type="RefSeq" id="WP_001168551.1">
    <property type="nucleotide sequence ID" value="NC_012125.1"/>
</dbReference>
<dbReference type="SMR" id="C0Q1B7"/>
<dbReference type="GeneID" id="89546728"/>
<dbReference type="KEGG" id="sei:SPC_3735"/>
<dbReference type="HOGENOM" id="CLU_057066_1_0_6"/>
<dbReference type="Proteomes" id="UP000001599">
    <property type="component" value="Chromosome"/>
</dbReference>
<dbReference type="GO" id="GO:0005829">
    <property type="term" value="C:cytosol"/>
    <property type="evidence" value="ECO:0007669"/>
    <property type="project" value="TreeGrafter"/>
</dbReference>
<dbReference type="GO" id="GO:0005524">
    <property type="term" value="F:ATP binding"/>
    <property type="evidence" value="ECO:0007669"/>
    <property type="project" value="UniProtKB-UniRule"/>
</dbReference>
<dbReference type="GO" id="GO:0004820">
    <property type="term" value="F:glycine-tRNA ligase activity"/>
    <property type="evidence" value="ECO:0007669"/>
    <property type="project" value="UniProtKB-UniRule"/>
</dbReference>
<dbReference type="GO" id="GO:0006426">
    <property type="term" value="P:glycyl-tRNA aminoacylation"/>
    <property type="evidence" value="ECO:0007669"/>
    <property type="project" value="UniProtKB-UniRule"/>
</dbReference>
<dbReference type="CDD" id="cd00733">
    <property type="entry name" value="GlyRS_alpha_core"/>
    <property type="match status" value="1"/>
</dbReference>
<dbReference type="FunFam" id="1.20.58.180:FF:000001">
    <property type="entry name" value="Glycine--tRNA ligase alpha subunit"/>
    <property type="match status" value="1"/>
</dbReference>
<dbReference type="FunFam" id="3.30.930.10:FF:000006">
    <property type="entry name" value="Glycine--tRNA ligase alpha subunit"/>
    <property type="match status" value="1"/>
</dbReference>
<dbReference type="Gene3D" id="3.30.930.10">
    <property type="entry name" value="Bira Bifunctional Protein, Domain 2"/>
    <property type="match status" value="1"/>
</dbReference>
<dbReference type="Gene3D" id="1.20.58.180">
    <property type="entry name" value="Class II aaRS and biotin synthetases, domain 2"/>
    <property type="match status" value="1"/>
</dbReference>
<dbReference type="HAMAP" id="MF_00254">
    <property type="entry name" value="Gly_tRNA_synth_alpha"/>
    <property type="match status" value="1"/>
</dbReference>
<dbReference type="InterPro" id="IPR045864">
    <property type="entry name" value="aa-tRNA-synth_II/BPL/LPL"/>
</dbReference>
<dbReference type="InterPro" id="IPR006194">
    <property type="entry name" value="Gly-tRNA-synth_heterodimer"/>
</dbReference>
<dbReference type="InterPro" id="IPR002310">
    <property type="entry name" value="Gly-tRNA_ligase_asu"/>
</dbReference>
<dbReference type="NCBIfam" id="TIGR00388">
    <property type="entry name" value="glyQ"/>
    <property type="match status" value="1"/>
</dbReference>
<dbReference type="NCBIfam" id="NF006827">
    <property type="entry name" value="PRK09348.1"/>
    <property type="match status" value="1"/>
</dbReference>
<dbReference type="PANTHER" id="PTHR30075:SF2">
    <property type="entry name" value="GLYCINE--TRNA LIGASE, CHLOROPLASTIC_MITOCHONDRIAL 2"/>
    <property type="match status" value="1"/>
</dbReference>
<dbReference type="PANTHER" id="PTHR30075">
    <property type="entry name" value="GLYCYL-TRNA SYNTHETASE"/>
    <property type="match status" value="1"/>
</dbReference>
<dbReference type="Pfam" id="PF02091">
    <property type="entry name" value="tRNA-synt_2e"/>
    <property type="match status" value="1"/>
</dbReference>
<dbReference type="PRINTS" id="PR01044">
    <property type="entry name" value="TRNASYNTHGA"/>
</dbReference>
<dbReference type="SUPFAM" id="SSF55681">
    <property type="entry name" value="Class II aaRS and biotin synthetases"/>
    <property type="match status" value="1"/>
</dbReference>
<dbReference type="PROSITE" id="PS50861">
    <property type="entry name" value="AA_TRNA_LIGASE_II_GLYAB"/>
    <property type="match status" value="1"/>
</dbReference>